<protein>
    <recommendedName>
        <fullName evidence="1">Tryptophan synthase alpha chain</fullName>
        <ecNumber evidence="1">4.2.1.20</ecNumber>
    </recommendedName>
</protein>
<dbReference type="EC" id="4.2.1.20" evidence="1"/>
<dbReference type="EMBL" id="AE008923">
    <property type="protein sequence ID" value="AAM37561.1"/>
    <property type="molecule type" value="Genomic_DNA"/>
</dbReference>
<dbReference type="RefSeq" id="WP_003485519.1">
    <property type="nucleotide sequence ID" value="NC_003919.1"/>
</dbReference>
<dbReference type="SMR" id="Q8PJ29"/>
<dbReference type="GeneID" id="66911805"/>
<dbReference type="KEGG" id="xac:XAC2716"/>
<dbReference type="eggNOG" id="COG0159">
    <property type="taxonomic scope" value="Bacteria"/>
</dbReference>
<dbReference type="HOGENOM" id="CLU_016734_0_0_6"/>
<dbReference type="UniPathway" id="UPA00035">
    <property type="reaction ID" value="UER00044"/>
</dbReference>
<dbReference type="Proteomes" id="UP000000576">
    <property type="component" value="Chromosome"/>
</dbReference>
<dbReference type="GO" id="GO:0005829">
    <property type="term" value="C:cytosol"/>
    <property type="evidence" value="ECO:0007669"/>
    <property type="project" value="TreeGrafter"/>
</dbReference>
<dbReference type="GO" id="GO:0004834">
    <property type="term" value="F:tryptophan synthase activity"/>
    <property type="evidence" value="ECO:0007669"/>
    <property type="project" value="UniProtKB-UniRule"/>
</dbReference>
<dbReference type="CDD" id="cd04724">
    <property type="entry name" value="Tryptophan_synthase_alpha"/>
    <property type="match status" value="1"/>
</dbReference>
<dbReference type="FunFam" id="3.20.20.70:FF:000037">
    <property type="entry name" value="Tryptophan synthase alpha chain"/>
    <property type="match status" value="1"/>
</dbReference>
<dbReference type="Gene3D" id="3.20.20.70">
    <property type="entry name" value="Aldolase class I"/>
    <property type="match status" value="1"/>
</dbReference>
<dbReference type="HAMAP" id="MF_00131">
    <property type="entry name" value="Trp_synth_alpha"/>
    <property type="match status" value="1"/>
</dbReference>
<dbReference type="InterPro" id="IPR013785">
    <property type="entry name" value="Aldolase_TIM"/>
</dbReference>
<dbReference type="InterPro" id="IPR011060">
    <property type="entry name" value="RibuloseP-bd_barrel"/>
</dbReference>
<dbReference type="InterPro" id="IPR018204">
    <property type="entry name" value="Trp_synthase_alpha_AS"/>
</dbReference>
<dbReference type="InterPro" id="IPR002028">
    <property type="entry name" value="Trp_synthase_suA"/>
</dbReference>
<dbReference type="NCBIfam" id="TIGR00262">
    <property type="entry name" value="trpA"/>
    <property type="match status" value="1"/>
</dbReference>
<dbReference type="PANTHER" id="PTHR43406:SF1">
    <property type="entry name" value="TRYPTOPHAN SYNTHASE ALPHA CHAIN, CHLOROPLASTIC"/>
    <property type="match status" value="1"/>
</dbReference>
<dbReference type="PANTHER" id="PTHR43406">
    <property type="entry name" value="TRYPTOPHAN SYNTHASE, ALPHA CHAIN"/>
    <property type="match status" value="1"/>
</dbReference>
<dbReference type="Pfam" id="PF00290">
    <property type="entry name" value="Trp_syntA"/>
    <property type="match status" value="1"/>
</dbReference>
<dbReference type="SUPFAM" id="SSF51366">
    <property type="entry name" value="Ribulose-phoshate binding barrel"/>
    <property type="match status" value="1"/>
</dbReference>
<dbReference type="PROSITE" id="PS00167">
    <property type="entry name" value="TRP_SYNTHASE_ALPHA"/>
    <property type="match status" value="1"/>
</dbReference>
<evidence type="ECO:0000255" key="1">
    <source>
        <dbReference type="HAMAP-Rule" id="MF_00131"/>
    </source>
</evidence>
<feature type="chain" id="PRO_0000098875" description="Tryptophan synthase alpha chain">
    <location>
        <begin position="1"/>
        <end position="268"/>
    </location>
</feature>
<feature type="active site" description="Proton acceptor" evidence="1">
    <location>
        <position position="49"/>
    </location>
</feature>
<feature type="active site" description="Proton acceptor" evidence="1">
    <location>
        <position position="60"/>
    </location>
</feature>
<sequence>MRRIDSCFAELRANGRKALIPFITAGDPSLEATVPVMHALVRAGADVIELGVPFSDPMADGPTIQRSSERALARGAGLAYVLEAVHEFRREDATTPVVLMGYLNPIEIHGTRRFAEAAVAAGVDGVLLVDLPPEEAGETRTIFTEVGLALIALASPTTSEQRLDMLCSTAQGYLYYVSFAGVTGASNLLDTHAASDRLRQLRRRAGAPVVAGFGIKDAASAAAMAVDADGVVVGSALVAALAEVNDVRSARERAEAFLAPLRQALDQG</sequence>
<keyword id="KW-0028">Amino-acid biosynthesis</keyword>
<keyword id="KW-0057">Aromatic amino acid biosynthesis</keyword>
<keyword id="KW-0456">Lyase</keyword>
<keyword id="KW-0822">Tryptophan biosynthesis</keyword>
<organism>
    <name type="scientific">Xanthomonas axonopodis pv. citri (strain 306)</name>
    <dbReference type="NCBI Taxonomy" id="190486"/>
    <lineage>
        <taxon>Bacteria</taxon>
        <taxon>Pseudomonadati</taxon>
        <taxon>Pseudomonadota</taxon>
        <taxon>Gammaproteobacteria</taxon>
        <taxon>Lysobacterales</taxon>
        <taxon>Lysobacteraceae</taxon>
        <taxon>Xanthomonas</taxon>
    </lineage>
</organism>
<name>TRPA_XANAC</name>
<accession>Q8PJ29</accession>
<reference key="1">
    <citation type="journal article" date="2002" name="Nature">
        <title>Comparison of the genomes of two Xanthomonas pathogens with differing host specificities.</title>
        <authorList>
            <person name="da Silva A.C.R."/>
            <person name="Ferro J.A."/>
            <person name="Reinach F.C."/>
            <person name="Farah C.S."/>
            <person name="Furlan L.R."/>
            <person name="Quaggio R.B."/>
            <person name="Monteiro-Vitorello C.B."/>
            <person name="Van Sluys M.A."/>
            <person name="Almeida N.F. Jr."/>
            <person name="Alves L.M.C."/>
            <person name="do Amaral A.M."/>
            <person name="Bertolini M.C."/>
            <person name="Camargo L.E.A."/>
            <person name="Camarotte G."/>
            <person name="Cannavan F."/>
            <person name="Cardozo J."/>
            <person name="Chambergo F."/>
            <person name="Ciapina L.P."/>
            <person name="Cicarelli R.M.B."/>
            <person name="Coutinho L.L."/>
            <person name="Cursino-Santos J.R."/>
            <person name="El-Dorry H."/>
            <person name="Faria J.B."/>
            <person name="Ferreira A.J.S."/>
            <person name="Ferreira R.C.C."/>
            <person name="Ferro M.I.T."/>
            <person name="Formighieri E.F."/>
            <person name="Franco M.C."/>
            <person name="Greggio C.C."/>
            <person name="Gruber A."/>
            <person name="Katsuyama A.M."/>
            <person name="Kishi L.T."/>
            <person name="Leite R.P."/>
            <person name="Lemos E.G.M."/>
            <person name="Lemos M.V.F."/>
            <person name="Locali E.C."/>
            <person name="Machado M.A."/>
            <person name="Madeira A.M.B.N."/>
            <person name="Martinez-Rossi N.M."/>
            <person name="Martins E.C."/>
            <person name="Meidanis J."/>
            <person name="Menck C.F.M."/>
            <person name="Miyaki C.Y."/>
            <person name="Moon D.H."/>
            <person name="Moreira L.M."/>
            <person name="Novo M.T.M."/>
            <person name="Okura V.K."/>
            <person name="Oliveira M.C."/>
            <person name="Oliveira V.R."/>
            <person name="Pereira H.A."/>
            <person name="Rossi A."/>
            <person name="Sena J.A.D."/>
            <person name="Silva C."/>
            <person name="de Souza R.F."/>
            <person name="Spinola L.A.F."/>
            <person name="Takita M.A."/>
            <person name="Tamura R.E."/>
            <person name="Teixeira E.C."/>
            <person name="Tezza R.I.D."/>
            <person name="Trindade dos Santos M."/>
            <person name="Truffi D."/>
            <person name="Tsai S.M."/>
            <person name="White F.F."/>
            <person name="Setubal J.C."/>
            <person name="Kitajima J.P."/>
        </authorList>
    </citation>
    <scope>NUCLEOTIDE SEQUENCE [LARGE SCALE GENOMIC DNA]</scope>
    <source>
        <strain>306</strain>
    </source>
</reference>
<comment type="function">
    <text evidence="1">The alpha subunit is responsible for the aldol cleavage of indoleglycerol phosphate to indole and glyceraldehyde 3-phosphate.</text>
</comment>
<comment type="catalytic activity">
    <reaction evidence="1">
        <text>(1S,2R)-1-C-(indol-3-yl)glycerol 3-phosphate + L-serine = D-glyceraldehyde 3-phosphate + L-tryptophan + H2O</text>
        <dbReference type="Rhea" id="RHEA:10532"/>
        <dbReference type="ChEBI" id="CHEBI:15377"/>
        <dbReference type="ChEBI" id="CHEBI:33384"/>
        <dbReference type="ChEBI" id="CHEBI:57912"/>
        <dbReference type="ChEBI" id="CHEBI:58866"/>
        <dbReference type="ChEBI" id="CHEBI:59776"/>
        <dbReference type="EC" id="4.2.1.20"/>
    </reaction>
</comment>
<comment type="pathway">
    <text evidence="1">Amino-acid biosynthesis; L-tryptophan biosynthesis; L-tryptophan from chorismate: step 5/5.</text>
</comment>
<comment type="subunit">
    <text evidence="1">Tetramer of two alpha and two beta chains.</text>
</comment>
<comment type="similarity">
    <text evidence="1">Belongs to the TrpA family.</text>
</comment>
<proteinExistence type="inferred from homology"/>
<gene>
    <name evidence="1" type="primary">trpA</name>
    <name type="ordered locus">XAC2716</name>
</gene>